<comment type="function">
    <text evidence="2">Transaldolase is important for the balance of metabolites in the pentose-phosphate pathway.</text>
</comment>
<comment type="catalytic activity">
    <reaction evidence="2">
        <text>D-sedoheptulose 7-phosphate + D-glyceraldehyde 3-phosphate = D-erythrose 4-phosphate + beta-D-fructose 6-phosphate</text>
        <dbReference type="Rhea" id="RHEA:17053"/>
        <dbReference type="ChEBI" id="CHEBI:16897"/>
        <dbReference type="ChEBI" id="CHEBI:57483"/>
        <dbReference type="ChEBI" id="CHEBI:57634"/>
        <dbReference type="ChEBI" id="CHEBI:59776"/>
        <dbReference type="EC" id="2.2.1.2"/>
    </reaction>
</comment>
<comment type="pathway">
    <text evidence="2">Carbohydrate degradation; pentose phosphate pathway; D-glyceraldehyde 3-phosphate and beta-D-fructose 6-phosphate from D-ribose 5-phosphate and D-xylulose 5-phosphate (non-oxidative stage): step 2/3.</text>
</comment>
<comment type="subunit">
    <text evidence="1">Homodimer.</text>
</comment>
<comment type="subcellular location">
    <subcellularLocation>
        <location evidence="2">Cytoplasm</location>
    </subcellularLocation>
</comment>
<comment type="similarity">
    <text evidence="2">Belongs to the transaldolase family. Type 1 subfamily.</text>
</comment>
<evidence type="ECO:0000250" key="1"/>
<evidence type="ECO:0000255" key="2">
    <source>
        <dbReference type="HAMAP-Rule" id="MF_00492"/>
    </source>
</evidence>
<keyword id="KW-0963">Cytoplasm</keyword>
<keyword id="KW-0570">Pentose shunt</keyword>
<keyword id="KW-1185">Reference proteome</keyword>
<keyword id="KW-0704">Schiff base</keyword>
<keyword id="KW-0808">Transferase</keyword>
<sequence length="315" mass="34314">MTQLDALKQFTTVVADTGDFRQLAQFKPQDATTNPSLILKAVQKADYAPLMRDTVGRFKGRALDEVMDRLLVRFGCEILSIIPGRVSTEVDARLSFDTSATVTRGERLIELYQAEGIHIDRVLIKVAATWEGIEAARELEQRGIHTNLTLLFSFCQAVACGQARVQLISPFVGRIYDWYKKSAGSGWNEAANADANDPGVKSVREIYNHYKHFGIATEVMGASFRNIGQITALAGCDLLTISPELLAQLAASDAPLARALDADSAAALDLPAKSFDETGFRYALNEDAMATEKLAEGIRAFAADAVKLEQLLLAA</sequence>
<feature type="chain" id="PRO_1000014505" description="Transaldolase">
    <location>
        <begin position="1"/>
        <end position="315"/>
    </location>
</feature>
<feature type="active site" description="Schiff-base intermediate with substrate" evidence="2">
    <location>
        <position position="125"/>
    </location>
</feature>
<dbReference type="EC" id="2.2.1.2" evidence="2"/>
<dbReference type="EMBL" id="CP000529">
    <property type="protein sequence ID" value="ABM35973.1"/>
    <property type="molecule type" value="Genomic_DNA"/>
</dbReference>
<dbReference type="RefSeq" id="WP_011800068.1">
    <property type="nucleotide sequence ID" value="NC_008781.1"/>
</dbReference>
<dbReference type="SMR" id="A1VJZ5"/>
<dbReference type="STRING" id="365044.Pnap_0654"/>
<dbReference type="KEGG" id="pna:Pnap_0654"/>
<dbReference type="eggNOG" id="COG0176">
    <property type="taxonomic scope" value="Bacteria"/>
</dbReference>
<dbReference type="HOGENOM" id="CLU_047470_0_1_4"/>
<dbReference type="OrthoDB" id="9809101at2"/>
<dbReference type="UniPathway" id="UPA00115">
    <property type="reaction ID" value="UER00414"/>
</dbReference>
<dbReference type="Proteomes" id="UP000000644">
    <property type="component" value="Chromosome"/>
</dbReference>
<dbReference type="GO" id="GO:0005737">
    <property type="term" value="C:cytoplasm"/>
    <property type="evidence" value="ECO:0007669"/>
    <property type="project" value="UniProtKB-SubCell"/>
</dbReference>
<dbReference type="GO" id="GO:0004801">
    <property type="term" value="F:transaldolase activity"/>
    <property type="evidence" value="ECO:0000250"/>
    <property type="project" value="UniProtKB"/>
</dbReference>
<dbReference type="GO" id="GO:0005975">
    <property type="term" value="P:carbohydrate metabolic process"/>
    <property type="evidence" value="ECO:0007669"/>
    <property type="project" value="InterPro"/>
</dbReference>
<dbReference type="GO" id="GO:0009052">
    <property type="term" value="P:pentose-phosphate shunt, non-oxidative branch"/>
    <property type="evidence" value="ECO:0007669"/>
    <property type="project" value="TreeGrafter"/>
</dbReference>
<dbReference type="CDD" id="cd00957">
    <property type="entry name" value="Transaldolase_TalAB"/>
    <property type="match status" value="1"/>
</dbReference>
<dbReference type="FunFam" id="3.20.20.70:FF:000002">
    <property type="entry name" value="Transaldolase"/>
    <property type="match status" value="1"/>
</dbReference>
<dbReference type="Gene3D" id="3.20.20.70">
    <property type="entry name" value="Aldolase class I"/>
    <property type="match status" value="1"/>
</dbReference>
<dbReference type="HAMAP" id="MF_00492">
    <property type="entry name" value="Transaldolase_1"/>
    <property type="match status" value="1"/>
</dbReference>
<dbReference type="InterPro" id="IPR013785">
    <property type="entry name" value="Aldolase_TIM"/>
</dbReference>
<dbReference type="InterPro" id="IPR001585">
    <property type="entry name" value="TAL/FSA"/>
</dbReference>
<dbReference type="InterPro" id="IPR004730">
    <property type="entry name" value="Transaldolase_1"/>
</dbReference>
<dbReference type="InterPro" id="IPR018225">
    <property type="entry name" value="Transaldolase_AS"/>
</dbReference>
<dbReference type="NCBIfam" id="TIGR00874">
    <property type="entry name" value="talAB"/>
    <property type="match status" value="1"/>
</dbReference>
<dbReference type="PANTHER" id="PTHR10683">
    <property type="entry name" value="TRANSALDOLASE"/>
    <property type="match status" value="1"/>
</dbReference>
<dbReference type="PANTHER" id="PTHR10683:SF18">
    <property type="entry name" value="TRANSALDOLASE"/>
    <property type="match status" value="1"/>
</dbReference>
<dbReference type="Pfam" id="PF00923">
    <property type="entry name" value="TAL_FSA"/>
    <property type="match status" value="1"/>
</dbReference>
<dbReference type="SUPFAM" id="SSF51569">
    <property type="entry name" value="Aldolase"/>
    <property type="match status" value="1"/>
</dbReference>
<dbReference type="PROSITE" id="PS01054">
    <property type="entry name" value="TRANSALDOLASE_1"/>
    <property type="match status" value="1"/>
</dbReference>
<dbReference type="PROSITE" id="PS00958">
    <property type="entry name" value="TRANSALDOLASE_2"/>
    <property type="match status" value="1"/>
</dbReference>
<accession>A1VJZ5</accession>
<gene>
    <name evidence="2" type="primary">tal</name>
    <name type="ordered locus">Pnap_0654</name>
</gene>
<name>TAL_POLNA</name>
<protein>
    <recommendedName>
        <fullName evidence="2">Transaldolase</fullName>
        <ecNumber evidence="2">2.2.1.2</ecNumber>
    </recommendedName>
</protein>
<proteinExistence type="inferred from homology"/>
<organism>
    <name type="scientific">Polaromonas naphthalenivorans (strain CJ2)</name>
    <dbReference type="NCBI Taxonomy" id="365044"/>
    <lineage>
        <taxon>Bacteria</taxon>
        <taxon>Pseudomonadati</taxon>
        <taxon>Pseudomonadota</taxon>
        <taxon>Betaproteobacteria</taxon>
        <taxon>Burkholderiales</taxon>
        <taxon>Comamonadaceae</taxon>
        <taxon>Polaromonas</taxon>
    </lineage>
</organism>
<reference key="1">
    <citation type="journal article" date="2009" name="Environ. Microbiol.">
        <title>The genome of Polaromonas naphthalenivorans strain CJ2, isolated from coal tar-contaminated sediment, reveals physiological and metabolic versatility and evolution through extensive horizontal gene transfer.</title>
        <authorList>
            <person name="Yagi J.M."/>
            <person name="Sims D."/>
            <person name="Brettin T."/>
            <person name="Bruce D."/>
            <person name="Madsen E.L."/>
        </authorList>
    </citation>
    <scope>NUCLEOTIDE SEQUENCE [LARGE SCALE GENOMIC DNA]</scope>
    <source>
        <strain>CJ2</strain>
    </source>
</reference>